<gene>
    <name type="primary">Cdkn2b</name>
</gene>
<sequence>MLGGSSDAGLATAAARGQVETVRQLLEAGADPNALNRFGRRPIQVMMMGSAQVAELLLLHGAEPNCADPATLTRPVHDAAREGFLDTLVVLHRAGARLDVCDAWGRLPVDLAEEQGHRDIARYLHAATGD</sequence>
<organism>
    <name type="scientific">Mus musculus</name>
    <name type="common">Mouse</name>
    <dbReference type="NCBI Taxonomy" id="10090"/>
    <lineage>
        <taxon>Eukaryota</taxon>
        <taxon>Metazoa</taxon>
        <taxon>Chordata</taxon>
        <taxon>Craniata</taxon>
        <taxon>Vertebrata</taxon>
        <taxon>Euteleostomi</taxon>
        <taxon>Mammalia</taxon>
        <taxon>Eutheria</taxon>
        <taxon>Euarchontoglires</taxon>
        <taxon>Glires</taxon>
        <taxon>Rodentia</taxon>
        <taxon>Myomorpha</taxon>
        <taxon>Muroidea</taxon>
        <taxon>Muridae</taxon>
        <taxon>Murinae</taxon>
        <taxon>Mus</taxon>
        <taxon>Mus</taxon>
    </lineage>
</organism>
<name>CDN2B_MOUSE</name>
<accession>P55271</accession>
<feature type="chain" id="PRO_0000144185" description="Cyclin-dependent kinase 4 inhibitor B">
    <location>
        <begin position="1"/>
        <end position="130"/>
    </location>
</feature>
<feature type="repeat" description="ANK 1">
    <location>
        <begin position="5"/>
        <end position="34"/>
    </location>
</feature>
<feature type="repeat" description="ANK 2">
    <location>
        <begin position="38"/>
        <end position="66"/>
    </location>
</feature>
<feature type="repeat" description="ANK 3">
    <location>
        <begin position="71"/>
        <end position="100"/>
    </location>
</feature>
<feature type="repeat" description="ANK 4">
    <location>
        <begin position="104"/>
        <end position="130"/>
    </location>
</feature>
<feature type="modified residue" description="Phosphothreonine" evidence="3">
    <location>
        <position position="12"/>
    </location>
</feature>
<feature type="helix" evidence="4">
    <location>
        <begin position="9"/>
        <end position="15"/>
    </location>
</feature>
<feature type="helix" evidence="4">
    <location>
        <begin position="19"/>
        <end position="27"/>
    </location>
</feature>
<feature type="turn" evidence="4">
    <location>
        <begin position="41"/>
        <end position="45"/>
    </location>
</feature>
<feature type="helix" evidence="4">
    <location>
        <begin position="51"/>
        <end position="60"/>
    </location>
</feature>
<feature type="turn" evidence="4">
    <location>
        <begin position="69"/>
        <end position="72"/>
    </location>
</feature>
<feature type="helix" evidence="4">
    <location>
        <begin position="75"/>
        <end position="82"/>
    </location>
</feature>
<feature type="helix" evidence="4">
    <location>
        <begin position="85"/>
        <end position="93"/>
    </location>
</feature>
<feature type="strand" evidence="4">
    <location>
        <begin position="102"/>
        <end position="106"/>
    </location>
</feature>
<feature type="helix" evidence="4">
    <location>
        <begin position="108"/>
        <end position="115"/>
    </location>
</feature>
<feature type="helix" evidence="4">
    <location>
        <begin position="118"/>
        <end position="128"/>
    </location>
</feature>
<evidence type="ECO:0000250" key="1"/>
<evidence type="ECO:0000305" key="2"/>
<evidence type="ECO:0007744" key="3">
    <source>
    </source>
</evidence>
<evidence type="ECO:0007829" key="4">
    <source>
        <dbReference type="PDB" id="1D9S"/>
    </source>
</evidence>
<reference key="1">
    <citation type="journal article" date="1995" name="Oncogene">
        <title>Cloning and characterization of murine p16INK4a and p15INK4b genes.</title>
        <authorList>
            <person name="Quelle D.E."/>
            <person name="Ashmun R.A."/>
            <person name="Hannon G.J."/>
            <person name="Rehberger P.A."/>
            <person name="Trono D."/>
            <person name="Richter K.H."/>
            <person name="Walker C."/>
            <person name="Beach D."/>
            <person name="Sherr C.J."/>
            <person name="Serrano M."/>
        </authorList>
    </citation>
    <scope>NUCLEOTIDE SEQUENCE</scope>
</reference>
<reference key="2">
    <citation type="journal article" date="1997" name="Oncogene">
        <title>Inactivation of the cyclin-dependent kinase inhibitor p15INK4b by deletion and de novo methylation with independence of p16INK4a alterations in murine primary T-cell lymphomas.</title>
        <authorList>
            <person name="Malumbres M."/>
            <person name="de Castro I.P."/>
            <person name="Santos J."/>
            <person name="Melendez B."/>
            <person name="Mangues R."/>
            <person name="Serrano M."/>
            <person name="Pellicer A."/>
            <person name="Fernandez-Piqueras J."/>
        </authorList>
    </citation>
    <scope>NUCLEOTIDE SEQUENCE [GENOMIC DNA]</scope>
    <source>
        <strain>C57BL/6J X DBA</strain>
    </source>
</reference>
<reference key="3">
    <citation type="journal article" date="2004" name="Genome Res.">
        <title>The status, quality, and expansion of the NIH full-length cDNA project: the Mammalian Gene Collection (MGC).</title>
        <authorList>
            <consortium name="The MGC Project Team"/>
        </authorList>
    </citation>
    <scope>NUCLEOTIDE SEQUENCE [LARGE SCALE MRNA]</scope>
    <source>
        <strain>Czech II</strain>
        <tissue>Mammary gland</tissue>
    </source>
</reference>
<reference key="4">
    <citation type="journal article" date="2004" name="Mol. Cell. Proteomics">
        <title>Phosphoproteomic analysis of the developing mouse brain.</title>
        <authorList>
            <person name="Ballif B.A."/>
            <person name="Villen J."/>
            <person name="Beausoleil S.A."/>
            <person name="Schwartz D."/>
            <person name="Gygi S.P."/>
        </authorList>
    </citation>
    <scope>PHOSPHORYLATION [LARGE SCALE ANALYSIS] AT THR-12</scope>
    <scope>IDENTIFICATION BY MASS SPECTROMETRY [LARGE SCALE ANALYSIS]</scope>
    <source>
        <tissue>Embryonic brain</tissue>
    </source>
</reference>
<reference key="5">
    <citation type="journal article" date="1999" name="J. Mol. Biol.">
        <title>Tumor suppressor INK4: comparisons of conformational properties between p16(INK4A) and p18(INK4C).</title>
        <authorList>
            <person name="Yuan C."/>
            <person name="Li J."/>
            <person name="Selby T.L."/>
            <person name="Byeon I.-J."/>
            <person name="Tsai M.-D."/>
        </authorList>
    </citation>
    <scope>STRUCTURE BY NMR</scope>
</reference>
<protein>
    <recommendedName>
        <fullName>Cyclin-dependent kinase 4 inhibitor B</fullName>
    </recommendedName>
    <alternativeName>
        <fullName>p14-INK4b</fullName>
    </alternativeName>
    <alternativeName>
        <fullName>p15-INK4b</fullName>
    </alternativeName>
</protein>
<comment type="function">
    <text evidence="1">Interacts strongly with CDK4 and CDK6. Potent inhibitor. Potential effector of TGF-beta induced cell cycle arrest (By similarity).</text>
</comment>
<comment type="subunit">
    <text evidence="1">Heterodimer of CDKN2B with CDK4 or CDK6.</text>
</comment>
<comment type="tissue specificity">
    <text>Expressed ubiquitously.</text>
</comment>
<comment type="induction">
    <text>By TGF-beta.</text>
</comment>
<comment type="similarity">
    <text evidence="2">Belongs to the CDKN2 cyclin-dependent kinase inhibitor family.</text>
</comment>
<proteinExistence type="evidence at protein level"/>
<keyword id="KW-0002">3D-structure</keyword>
<keyword id="KW-0040">ANK repeat</keyword>
<keyword id="KW-0131">Cell cycle</keyword>
<keyword id="KW-0597">Phosphoprotein</keyword>
<keyword id="KW-1185">Reference proteome</keyword>
<keyword id="KW-0677">Repeat</keyword>
<keyword id="KW-0043">Tumor suppressor</keyword>
<dbReference type="EMBL" id="U66085">
    <property type="protein sequence ID" value="AAB39833.1"/>
    <property type="molecule type" value="Genomic_DNA"/>
</dbReference>
<dbReference type="EMBL" id="U66084">
    <property type="protein sequence ID" value="AAB39833.1"/>
    <property type="status" value="JOINED"/>
    <property type="molecule type" value="Genomic_DNA"/>
</dbReference>
<dbReference type="EMBL" id="BC002010">
    <property type="protein sequence ID" value="AAH02010.1"/>
    <property type="molecule type" value="mRNA"/>
</dbReference>
<dbReference type="CCDS" id="CCDS18351.1"/>
<dbReference type="RefSeq" id="NP_031696.1">
    <property type="nucleotide sequence ID" value="NM_007670.4"/>
</dbReference>
<dbReference type="PDB" id="1D9S">
    <property type="method" value="NMR"/>
    <property type="chains" value="A=1-130"/>
</dbReference>
<dbReference type="PDBsum" id="1D9S"/>
<dbReference type="BMRB" id="P55271"/>
<dbReference type="SMR" id="P55271"/>
<dbReference type="BioGRID" id="198655">
    <property type="interactions" value="1"/>
</dbReference>
<dbReference type="DIP" id="DIP-60249N"/>
<dbReference type="FunCoup" id="P55271">
    <property type="interactions" value="1566"/>
</dbReference>
<dbReference type="IntAct" id="P55271">
    <property type="interactions" value="1"/>
</dbReference>
<dbReference type="STRING" id="10090.ENSMUSP00000095595"/>
<dbReference type="iPTMnet" id="P55271"/>
<dbReference type="PhosphoSitePlus" id="P55271"/>
<dbReference type="PaxDb" id="10090-ENSMUSP00000095595"/>
<dbReference type="PeptideAtlas" id="P55271"/>
<dbReference type="ProteomicsDB" id="281521"/>
<dbReference type="Antibodypedia" id="3605">
    <property type="antibodies" value="624 antibodies from 37 providers"/>
</dbReference>
<dbReference type="DNASU" id="12579"/>
<dbReference type="Ensembl" id="ENSMUST00000097981.6">
    <property type="protein sequence ID" value="ENSMUSP00000095595.5"/>
    <property type="gene ID" value="ENSMUSG00000073802.6"/>
</dbReference>
<dbReference type="GeneID" id="12579"/>
<dbReference type="KEGG" id="mmu:12579"/>
<dbReference type="UCSC" id="uc008tok.2">
    <property type="organism name" value="mouse"/>
</dbReference>
<dbReference type="AGR" id="MGI:104737"/>
<dbReference type="CTD" id="1030"/>
<dbReference type="MGI" id="MGI:104737">
    <property type="gene designation" value="Cdkn2b"/>
</dbReference>
<dbReference type="VEuPathDB" id="HostDB:ENSMUSG00000073802"/>
<dbReference type="eggNOG" id="KOG0504">
    <property type="taxonomic scope" value="Eukaryota"/>
</dbReference>
<dbReference type="GeneTree" id="ENSGT00940000162423"/>
<dbReference type="HOGENOM" id="CLU_000134_37_1_1"/>
<dbReference type="InParanoid" id="P55271"/>
<dbReference type="OMA" id="SALQVMM"/>
<dbReference type="OrthoDB" id="539213at2759"/>
<dbReference type="PhylomeDB" id="P55271"/>
<dbReference type="TreeFam" id="TF352389"/>
<dbReference type="Reactome" id="R-MMU-2559580">
    <property type="pathway name" value="Oxidative Stress Induced Senescence"/>
</dbReference>
<dbReference type="Reactome" id="R-MMU-2559582">
    <property type="pathway name" value="Senescence-Associated Secretory Phenotype (SASP)"/>
</dbReference>
<dbReference type="Reactome" id="R-MMU-2559585">
    <property type="pathway name" value="Oncogene Induced Senescence"/>
</dbReference>
<dbReference type="Reactome" id="R-MMU-69231">
    <property type="pathway name" value="Cyclin D associated events in G1"/>
</dbReference>
<dbReference type="BioGRID-ORCS" id="12579">
    <property type="hits" value="1 hit in 80 CRISPR screens"/>
</dbReference>
<dbReference type="EvolutionaryTrace" id="P55271"/>
<dbReference type="PRO" id="PR:P55271"/>
<dbReference type="Proteomes" id="UP000000589">
    <property type="component" value="Chromosome 4"/>
</dbReference>
<dbReference type="RNAct" id="P55271">
    <property type="molecule type" value="protein"/>
</dbReference>
<dbReference type="Bgee" id="ENSMUSG00000073802">
    <property type="expression patterns" value="Expressed in small intestine Peyer's patch and 153 other cell types or tissues"/>
</dbReference>
<dbReference type="ExpressionAtlas" id="P55271">
    <property type="expression patterns" value="baseline and differential"/>
</dbReference>
<dbReference type="GO" id="GO:0005737">
    <property type="term" value="C:cytoplasm"/>
    <property type="evidence" value="ECO:0007669"/>
    <property type="project" value="Ensembl"/>
</dbReference>
<dbReference type="GO" id="GO:0005634">
    <property type="term" value="C:nucleus"/>
    <property type="evidence" value="ECO:0007669"/>
    <property type="project" value="Ensembl"/>
</dbReference>
<dbReference type="GO" id="GO:0004861">
    <property type="term" value="F:cyclin-dependent protein serine/threonine kinase inhibitor activity"/>
    <property type="evidence" value="ECO:0007669"/>
    <property type="project" value="Ensembl"/>
</dbReference>
<dbReference type="GO" id="GO:0019901">
    <property type="term" value="F:protein kinase binding"/>
    <property type="evidence" value="ECO:0007669"/>
    <property type="project" value="Ensembl"/>
</dbReference>
<dbReference type="GO" id="GO:0071460">
    <property type="term" value="P:cellular response to cell-matrix adhesion"/>
    <property type="evidence" value="ECO:0007669"/>
    <property type="project" value="Ensembl"/>
</dbReference>
<dbReference type="GO" id="GO:0031670">
    <property type="term" value="P:cellular response to nutrient"/>
    <property type="evidence" value="ECO:0007669"/>
    <property type="project" value="Ensembl"/>
</dbReference>
<dbReference type="GO" id="GO:0090398">
    <property type="term" value="P:cellular senescence"/>
    <property type="evidence" value="ECO:0007669"/>
    <property type="project" value="Ensembl"/>
</dbReference>
<dbReference type="GO" id="GO:0030219">
    <property type="term" value="P:megakaryocyte differentiation"/>
    <property type="evidence" value="ECO:0007669"/>
    <property type="project" value="Ensembl"/>
</dbReference>
<dbReference type="GO" id="GO:0050680">
    <property type="term" value="P:negative regulation of epithelial cell proliferation"/>
    <property type="evidence" value="ECO:0007669"/>
    <property type="project" value="Ensembl"/>
</dbReference>
<dbReference type="GO" id="GO:2000134">
    <property type="term" value="P:negative regulation of G1/S transition of mitotic cell cycle"/>
    <property type="evidence" value="ECO:0000315"/>
    <property type="project" value="MGI"/>
</dbReference>
<dbReference type="GO" id="GO:0030511">
    <property type="term" value="P:positive regulation of transforming growth factor beta receptor signaling pathway"/>
    <property type="evidence" value="ECO:0007669"/>
    <property type="project" value="Ensembl"/>
</dbReference>
<dbReference type="GO" id="GO:0070316">
    <property type="term" value="P:regulation of G0 to G1 transition"/>
    <property type="evidence" value="ECO:0007669"/>
    <property type="project" value="Ensembl"/>
</dbReference>
<dbReference type="GO" id="GO:0048536">
    <property type="term" value="P:spleen development"/>
    <property type="evidence" value="ECO:0000316"/>
    <property type="project" value="MGI"/>
</dbReference>
<dbReference type="FunFam" id="1.25.40.20:FF:000107">
    <property type="entry name" value="cyclin-dependent kinase 4 inhibitor B"/>
    <property type="match status" value="1"/>
</dbReference>
<dbReference type="Gene3D" id="1.25.40.20">
    <property type="entry name" value="Ankyrin repeat-containing domain"/>
    <property type="match status" value="1"/>
</dbReference>
<dbReference type="InterPro" id="IPR050776">
    <property type="entry name" value="Ank_Repeat/CDKN_Inhibitor"/>
</dbReference>
<dbReference type="InterPro" id="IPR002110">
    <property type="entry name" value="Ankyrin_rpt"/>
</dbReference>
<dbReference type="InterPro" id="IPR036770">
    <property type="entry name" value="Ankyrin_rpt-contain_sf"/>
</dbReference>
<dbReference type="PANTHER" id="PTHR24201">
    <property type="entry name" value="ANK_REP_REGION DOMAIN-CONTAINING PROTEIN"/>
    <property type="match status" value="1"/>
</dbReference>
<dbReference type="PANTHER" id="PTHR24201:SF8">
    <property type="entry name" value="CYCLIN-DEPENDENT KINASE 4 INHIBITOR B"/>
    <property type="match status" value="1"/>
</dbReference>
<dbReference type="Pfam" id="PF12796">
    <property type="entry name" value="Ank_2"/>
    <property type="match status" value="1"/>
</dbReference>
<dbReference type="SMART" id="SM00248">
    <property type="entry name" value="ANK"/>
    <property type="match status" value="3"/>
</dbReference>
<dbReference type="SUPFAM" id="SSF48403">
    <property type="entry name" value="Ankyrin repeat"/>
    <property type="match status" value="1"/>
</dbReference>
<dbReference type="PROSITE" id="PS50297">
    <property type="entry name" value="ANK_REP_REGION"/>
    <property type="match status" value="1"/>
</dbReference>
<dbReference type="PROSITE" id="PS50088">
    <property type="entry name" value="ANK_REPEAT"/>
    <property type="match status" value="1"/>
</dbReference>